<protein>
    <recommendedName>
        <fullName>Tectonin-2</fullName>
    </recommendedName>
    <alternativeName>
        <fullName>Tectonin II</fullName>
    </alternativeName>
</protein>
<gene>
    <name type="primary">TECB</name>
</gene>
<keyword id="KW-0968">Cytoplasmic vesicle</keyword>
<keyword id="KW-0430">Lectin</keyword>
<keyword id="KW-0472">Membrane</keyword>
<keyword id="KW-0677">Repeat</keyword>
<proteinExistence type="evidence at protein level"/>
<reference key="1">
    <citation type="journal article" date="1998" name="J. Biol. Chem.">
        <title>Cloning and characterization of Physarum polycephalum tectonins. Homologues of Limulus lectin L-6.</title>
        <authorList>
            <person name="Huh C.-G."/>
            <person name="Aldrich J."/>
            <person name="Mottahedeh J."/>
            <person name="Kwon H."/>
            <person name="Johnson C."/>
            <person name="Marsh R."/>
        </authorList>
    </citation>
    <scope>NUCLEOTIDE SEQUENCE [MRNA]</scope>
    <scope>CHARACTERIZATION</scope>
    <source>
        <strain>M3</strain>
    </source>
</reference>
<sequence length="353" mass="39268">MATPVYIVLPSRPDHVVSTAKDHAVQGYTELHPYDPSQTEGRLWIFDNDGYIRLAANHNLVLDVNGGAAKEGNTVLSYPDKKDHAKNQLWVNKDCILHTKLDESFHLGVNDKGQVIITQKKEQRVILRAPASLEKRPSAWERHEGELNVVAVGAGNHDVWGVNHLEHIYHWDGSKWHQIEGAATNISVGLDGTVWCVNKAHEIYRLDRGTNKWSIVPGELVQVSVGNSHNIWGVNHLDAIYKWNADSNSWTFVDGQLTNVSVGHDGTVYGVNRAGNIYHYNGNSWDAVSGELVQIHVANKDLIVGVNKAGHVYRLKHGKDWEKLEGELSWVAVGHGGELWGANSAHNIYKALL</sequence>
<feature type="chain" id="PRO_0000221477" description="Tectonin-2">
    <location>
        <begin position="1"/>
        <end position="353"/>
    </location>
</feature>
<feature type="domain" description="Ricin B-type lectin" evidence="1">
    <location>
        <begin position="44"/>
        <end position="93"/>
    </location>
</feature>
<feature type="repeat" description="1">
    <location>
        <begin position="138"/>
        <end position="173"/>
    </location>
</feature>
<feature type="repeat" description="2">
    <location>
        <begin position="174"/>
        <end position="210"/>
    </location>
</feature>
<feature type="repeat" description="3">
    <location>
        <begin position="211"/>
        <end position="247"/>
    </location>
</feature>
<feature type="repeat" description="4">
    <location>
        <begin position="248"/>
        <end position="282"/>
    </location>
</feature>
<feature type="repeat" description="5">
    <location>
        <begin position="283"/>
        <end position="318"/>
    </location>
</feature>
<feature type="repeat" description="6">
    <location>
        <begin position="319"/>
        <end position="353"/>
    </location>
</feature>
<feature type="region of interest" description="6 X approximate tandem repeats">
    <location>
        <begin position="138"/>
        <end position="353"/>
    </location>
</feature>
<organism>
    <name type="scientific">Physarum polycephalum</name>
    <name type="common">Slime mold</name>
    <dbReference type="NCBI Taxonomy" id="5791"/>
    <lineage>
        <taxon>Eukaryota</taxon>
        <taxon>Amoebozoa</taxon>
        <taxon>Evosea</taxon>
        <taxon>Eumycetozoa</taxon>
        <taxon>Myxogastria</taxon>
        <taxon>Myxogastromycetidae</taxon>
        <taxon>Physariida</taxon>
        <taxon>Physaraceae</taxon>
        <taxon>Physarum</taxon>
    </lineage>
</organism>
<dbReference type="EMBL" id="AF041456">
    <property type="protein sequence ID" value="AAC06201.1"/>
    <property type="molecule type" value="mRNA"/>
</dbReference>
<dbReference type="SMR" id="O61064"/>
<dbReference type="GO" id="GO:0009986">
    <property type="term" value="C:cell surface"/>
    <property type="evidence" value="ECO:0007669"/>
    <property type="project" value="UniProtKB-SubCell"/>
</dbReference>
<dbReference type="GO" id="GO:0030659">
    <property type="term" value="C:cytoplasmic vesicle membrane"/>
    <property type="evidence" value="ECO:0007669"/>
    <property type="project" value="UniProtKB-SubCell"/>
</dbReference>
<dbReference type="GO" id="GO:0030246">
    <property type="term" value="F:carbohydrate binding"/>
    <property type="evidence" value="ECO:0007669"/>
    <property type="project" value="UniProtKB-KW"/>
</dbReference>
<dbReference type="Gene3D" id="2.80.10.50">
    <property type="match status" value="1"/>
</dbReference>
<dbReference type="InterPro" id="IPR006624">
    <property type="entry name" value="Beta-propeller_rpt_TECPR"/>
</dbReference>
<dbReference type="InterPro" id="IPR035992">
    <property type="entry name" value="Ricin_B-like_lectins"/>
</dbReference>
<dbReference type="InterPro" id="IPR051513">
    <property type="entry name" value="Tectonin_beta-propeller"/>
</dbReference>
<dbReference type="PANTHER" id="PTHR23250">
    <property type="entry name" value="DYSFERLIN-RELATED"/>
    <property type="match status" value="1"/>
</dbReference>
<dbReference type="PANTHER" id="PTHR23250:SF3">
    <property type="entry name" value="FISH-EGG LECTIN-LIKE ISOFORM X1-RELATED"/>
    <property type="match status" value="1"/>
</dbReference>
<dbReference type="Pfam" id="PF19193">
    <property type="entry name" value="Tectonin"/>
    <property type="match status" value="1"/>
</dbReference>
<dbReference type="SMART" id="SM00706">
    <property type="entry name" value="TECPR"/>
    <property type="match status" value="6"/>
</dbReference>
<dbReference type="SUPFAM" id="SSF63829">
    <property type="entry name" value="Calcium-dependent phosphotriesterase"/>
    <property type="match status" value="1"/>
</dbReference>
<dbReference type="SUPFAM" id="SSF50370">
    <property type="entry name" value="Ricin B-like lectins"/>
    <property type="match status" value="1"/>
</dbReference>
<dbReference type="PROSITE" id="PS50231">
    <property type="entry name" value="RICIN_B_LECTIN"/>
    <property type="match status" value="1"/>
</dbReference>
<comment type="function">
    <text>Probably involved in bacterial recognition. May be a lectin that function as part of a transmembrane signaling complex during phagocytosis.</text>
</comment>
<comment type="subcellular location">
    <subcellularLocation>
        <location>Cell surface</location>
    </subcellularLocation>
    <subcellularLocation>
        <location>Cytoplasmic vesicle membrane</location>
    </subcellularLocation>
    <text>Also bound to inner membrane of certain cytoplasmic vesicles.</text>
</comment>
<comment type="similarity">
    <text evidence="2">Belongs to the tectonin family.</text>
</comment>
<evidence type="ECO:0000255" key="1">
    <source>
        <dbReference type="PROSITE-ProRule" id="PRU00174"/>
    </source>
</evidence>
<evidence type="ECO:0000305" key="2"/>
<accession>O61064</accession>
<name>TCT2_PHYPO</name>